<proteinExistence type="inferred from homology"/>
<comment type="function">
    <text evidence="1">Mediates phase variation of the LPS epitopes. Phase variation of H.influenza LPS epitopes expressed by LicA is determined by a translational switch (By similarity).</text>
</comment>
<comment type="miscellaneous">
    <text>Lipopolysaccharide (LPS) is a glycolipid that is a necessary component and antigenic determinant of the outer membrane and has been shown to be an important factor in the host-parasite interaction in a number of Gram-negative species.</text>
</comment>
<comment type="miscellaneous">
    <text>H.influenzae is able to display an extensive repertoire of different surface configurations through variability of its LPS oligosaccharide.</text>
</comment>
<comment type="similarity">
    <text evidence="2">Belongs to the peptidase S49 family.</text>
</comment>
<reference key="1">
    <citation type="journal article" date="1995" name="Science">
        <title>Whole-genome random sequencing and assembly of Haemophilus influenzae Rd.</title>
        <authorList>
            <person name="Fleischmann R.D."/>
            <person name="Adams M.D."/>
            <person name="White O."/>
            <person name="Clayton R.A."/>
            <person name="Kirkness E.F."/>
            <person name="Kerlavage A.R."/>
            <person name="Bult C.J."/>
            <person name="Tomb J.-F."/>
            <person name="Dougherty B.A."/>
            <person name="Merrick J.M."/>
            <person name="McKenney K."/>
            <person name="Sutton G.G."/>
            <person name="FitzHugh W."/>
            <person name="Fields C.A."/>
            <person name="Gocayne J.D."/>
            <person name="Scott J.D."/>
            <person name="Shirley R."/>
            <person name="Liu L.-I."/>
            <person name="Glodek A."/>
            <person name="Kelley J.M."/>
            <person name="Weidman J.F."/>
            <person name="Phillips C.A."/>
            <person name="Spriggs T."/>
            <person name="Hedblom E."/>
            <person name="Cotton M.D."/>
            <person name="Utterback T.R."/>
            <person name="Hanna M.C."/>
            <person name="Nguyen D.T."/>
            <person name="Saudek D.M."/>
            <person name="Brandon R.C."/>
            <person name="Fine L.D."/>
            <person name="Fritchman J.L."/>
            <person name="Fuhrmann J.L."/>
            <person name="Geoghagen N.S.M."/>
            <person name="Gnehm C.L."/>
            <person name="McDonald L.A."/>
            <person name="Small K.V."/>
            <person name="Fraser C.M."/>
            <person name="Smith H.O."/>
            <person name="Venter J.C."/>
        </authorList>
    </citation>
    <scope>NUCLEOTIDE SEQUENCE [LARGE SCALE GENOMIC DNA]</scope>
    <source>
        <strain>ATCC 51907 / DSM 11121 / KW20 / Rd</strain>
    </source>
</reference>
<evidence type="ECO:0000250" key="1"/>
<evidence type="ECO:0000305" key="2"/>
<feature type="chain" id="PRO_0000171451" description="Protein LicA">
    <location>
        <begin position="1"/>
        <end position="267"/>
    </location>
</feature>
<protein>
    <recommendedName>
        <fullName>Protein LicA</fullName>
    </recommendedName>
</protein>
<organism>
    <name type="scientific">Haemophilus influenzae (strain ATCC 51907 / DSM 11121 / KW20 / Rd)</name>
    <dbReference type="NCBI Taxonomy" id="71421"/>
    <lineage>
        <taxon>Bacteria</taxon>
        <taxon>Pseudomonadati</taxon>
        <taxon>Pseudomonadota</taxon>
        <taxon>Gammaproteobacteria</taxon>
        <taxon>Pasteurellales</taxon>
        <taxon>Pasteurellaceae</taxon>
        <taxon>Haemophilus</taxon>
    </lineage>
</organism>
<keyword id="KW-1185">Reference proteome</keyword>
<accession>P71392</accession>
<name>LICA1_HAEIN</name>
<sequence length="267" mass="31395">MTNQNVLLNISGVKFVLRIPNAVNLSLINREYEAFNNAQAYRAGLNVETPVLDAKSGVKLTRYLENSNTLSQIQLNEQSCLSQVVNNLYRLHNSEFVFRNVFSVFDEFRQYFSLLENKSAFYQADSRMDKLSAVFWQFEEINKEVILRPCHNDLVPENMLLQDDRLFFIDWEYSGLNDPLFDIATIIEEAHLSKEAADFLLETYCNQTNKYHKTEFQIAHKRLKIHRFCQNVLWFLWTKVKEEHGENFGDYALKRLDAAFKLLEELP</sequence>
<dbReference type="EMBL" id="L42023">
    <property type="protein sequence ID" value="AAC23187.1"/>
    <property type="molecule type" value="Genomic_DNA"/>
</dbReference>
<dbReference type="PIR" id="B64128">
    <property type="entry name" value="B64128"/>
</dbReference>
<dbReference type="RefSeq" id="NP_439686.1">
    <property type="nucleotide sequence ID" value="NC_000907.1"/>
</dbReference>
<dbReference type="SMR" id="P71392"/>
<dbReference type="STRING" id="71421.HI_1537"/>
<dbReference type="DNASU" id="950399"/>
<dbReference type="EnsemblBacteria" id="AAC23187">
    <property type="protein sequence ID" value="AAC23187"/>
    <property type="gene ID" value="HI_1537"/>
</dbReference>
<dbReference type="KEGG" id="hin:HI_1537"/>
<dbReference type="PATRIC" id="fig|71421.8.peg.1608"/>
<dbReference type="eggNOG" id="COG0510">
    <property type="taxonomic scope" value="Bacteria"/>
</dbReference>
<dbReference type="HOGENOM" id="CLU_055115_1_0_6"/>
<dbReference type="OrthoDB" id="179763at2"/>
<dbReference type="PhylomeDB" id="P71392"/>
<dbReference type="BioCyc" id="HINF71421:G1GJ1-1557-MONOMER"/>
<dbReference type="Proteomes" id="UP000000579">
    <property type="component" value="Chromosome"/>
</dbReference>
<dbReference type="GO" id="GO:0005737">
    <property type="term" value="C:cytoplasm"/>
    <property type="evidence" value="ECO:0000318"/>
    <property type="project" value="GO_Central"/>
</dbReference>
<dbReference type="GO" id="GO:0004305">
    <property type="term" value="F:ethanolamine kinase activity"/>
    <property type="evidence" value="ECO:0000318"/>
    <property type="project" value="GO_Central"/>
</dbReference>
<dbReference type="GO" id="GO:0006646">
    <property type="term" value="P:phosphatidylethanolamine biosynthetic process"/>
    <property type="evidence" value="ECO:0000318"/>
    <property type="project" value="GO_Central"/>
</dbReference>
<dbReference type="CDD" id="cd05151">
    <property type="entry name" value="ChoK-like"/>
    <property type="match status" value="1"/>
</dbReference>
<dbReference type="Gene3D" id="3.90.1200.10">
    <property type="match status" value="1"/>
</dbReference>
<dbReference type="Gene3D" id="3.30.200.20">
    <property type="entry name" value="Phosphorylase Kinase, domain 1"/>
    <property type="match status" value="1"/>
</dbReference>
<dbReference type="InterPro" id="IPR052077">
    <property type="entry name" value="CcrZ_PhaseVar_Mediator"/>
</dbReference>
<dbReference type="InterPro" id="IPR011009">
    <property type="entry name" value="Kinase-like_dom_sf"/>
</dbReference>
<dbReference type="PANTHER" id="PTHR40086:SF1">
    <property type="entry name" value="CELL CYCLE REGULATOR CCRZ"/>
    <property type="match status" value="1"/>
</dbReference>
<dbReference type="PANTHER" id="PTHR40086">
    <property type="entry name" value="PHOSPHOTRANSFERASE YTMP-RELATED"/>
    <property type="match status" value="1"/>
</dbReference>
<dbReference type="Pfam" id="PF01633">
    <property type="entry name" value="Choline_kinase"/>
    <property type="match status" value="1"/>
</dbReference>
<dbReference type="SUPFAM" id="SSF56112">
    <property type="entry name" value="Protein kinase-like (PK-like)"/>
    <property type="match status" value="1"/>
</dbReference>
<gene>
    <name type="primary">licA</name>
    <name type="ordered locus">HI_1537</name>
</gene>